<reference key="1">
    <citation type="journal article" date="2004" name="Science">
        <title>The complete genome sequence of Propionibacterium acnes, a commensal of human skin.</title>
        <authorList>
            <person name="Brueggemann H."/>
            <person name="Henne A."/>
            <person name="Hoster F."/>
            <person name="Liesegang H."/>
            <person name="Wiezer A."/>
            <person name="Strittmatter A."/>
            <person name="Hujer S."/>
            <person name="Duerre P."/>
            <person name="Gottschalk G."/>
        </authorList>
    </citation>
    <scope>NUCLEOTIDE SEQUENCE [LARGE SCALE GENOMIC DNA]</scope>
    <source>
        <strain>DSM 16379 / KPA171202</strain>
    </source>
</reference>
<sequence>MAMSSRVIEQAIAARSAATVLRRLRRIDKDDLLAAMGIGLRKGVDEILAANGADVDRGRDAGMDEALLDRLTLTPERIEGMAVGLEGVAHLDDPVGEVVRGWHTPLGVKIEQVRVPIGVIGIIYEARPNVTSDAAGICLKSGNACLLRGSSSALESNRAVIAAMRSRLPEEIREAVQLVEGGHEVTDELMTARGYVDLLIPRGGAGLINAVVTGAKVPVIQTGTGNCHLVIDVSADVEMAVNIAVNAKTQRPSVCNAIETVLVHRGIADSAVRPLVDAMSERGVTVHGDEESIRLDPRIVPAAPDEYDNEYLSLDLALRIVDDLEEAVDHIAKHGSGHSETIVTKSMSSQEFFASSVDAAAVLVNCSSRFVDGGEFGFGAEIGISTQKLHARGPMGLREMTTTTYVLRGDGQTRP</sequence>
<protein>
    <recommendedName>
        <fullName evidence="1">Gamma-glutamyl phosphate reductase</fullName>
        <shortName evidence="1">GPR</shortName>
        <ecNumber evidence="1">1.2.1.41</ecNumber>
    </recommendedName>
    <alternativeName>
        <fullName evidence="1">Glutamate-5-semialdehyde dehydrogenase</fullName>
    </alternativeName>
    <alternativeName>
        <fullName evidence="1">Glutamyl-gamma-semialdehyde dehydrogenase</fullName>
        <shortName evidence="1">GSA dehydrogenase</shortName>
    </alternativeName>
</protein>
<comment type="function">
    <text evidence="1">Catalyzes the NADPH-dependent reduction of L-glutamate 5-phosphate into L-glutamate 5-semialdehyde and phosphate. The product spontaneously undergoes cyclization to form 1-pyrroline-5-carboxylate.</text>
</comment>
<comment type="catalytic activity">
    <reaction evidence="1">
        <text>L-glutamate 5-semialdehyde + phosphate + NADP(+) = L-glutamyl 5-phosphate + NADPH + H(+)</text>
        <dbReference type="Rhea" id="RHEA:19541"/>
        <dbReference type="ChEBI" id="CHEBI:15378"/>
        <dbReference type="ChEBI" id="CHEBI:43474"/>
        <dbReference type="ChEBI" id="CHEBI:57783"/>
        <dbReference type="ChEBI" id="CHEBI:58066"/>
        <dbReference type="ChEBI" id="CHEBI:58274"/>
        <dbReference type="ChEBI" id="CHEBI:58349"/>
        <dbReference type="EC" id="1.2.1.41"/>
    </reaction>
</comment>
<comment type="pathway">
    <text evidence="1">Amino-acid biosynthesis; L-proline biosynthesis; L-glutamate 5-semialdehyde from L-glutamate: step 2/2.</text>
</comment>
<comment type="subcellular location">
    <subcellularLocation>
        <location evidence="1">Cytoplasm</location>
    </subcellularLocation>
</comment>
<comment type="similarity">
    <text evidence="1">Belongs to the gamma-glutamyl phosphate reductase family.</text>
</comment>
<feature type="chain" id="PRO_0000189763" description="Gamma-glutamyl phosphate reductase">
    <location>
        <begin position="1"/>
        <end position="415"/>
    </location>
</feature>
<organism>
    <name type="scientific">Cutibacterium acnes (strain DSM 16379 / KPA171202)</name>
    <name type="common">Propionibacterium acnes</name>
    <dbReference type="NCBI Taxonomy" id="267747"/>
    <lineage>
        <taxon>Bacteria</taxon>
        <taxon>Bacillati</taxon>
        <taxon>Actinomycetota</taxon>
        <taxon>Actinomycetes</taxon>
        <taxon>Propionibacteriales</taxon>
        <taxon>Propionibacteriaceae</taxon>
        <taxon>Cutibacterium</taxon>
    </lineage>
</organism>
<name>PROA_CUTAK</name>
<gene>
    <name evidence="1" type="primary">proA</name>
    <name type="ordered locus">PPA0835</name>
</gene>
<proteinExistence type="inferred from homology"/>
<evidence type="ECO:0000255" key="1">
    <source>
        <dbReference type="HAMAP-Rule" id="MF_00412"/>
    </source>
</evidence>
<dbReference type="EC" id="1.2.1.41" evidence="1"/>
<dbReference type="EMBL" id="AE017283">
    <property type="protein sequence ID" value="AAT82590.1"/>
    <property type="molecule type" value="Genomic_DNA"/>
</dbReference>
<dbReference type="RefSeq" id="WP_011183754.1">
    <property type="nucleotide sequence ID" value="NC_006085.1"/>
</dbReference>
<dbReference type="SMR" id="Q6A9H6"/>
<dbReference type="EnsemblBacteria" id="AAT82590">
    <property type="protein sequence ID" value="AAT82590"/>
    <property type="gene ID" value="PPA0835"/>
</dbReference>
<dbReference type="KEGG" id="pac:PPA0835"/>
<dbReference type="PATRIC" id="fig|267747.3.peg.870"/>
<dbReference type="eggNOG" id="COG0014">
    <property type="taxonomic scope" value="Bacteria"/>
</dbReference>
<dbReference type="HOGENOM" id="CLU_030231_0_0_11"/>
<dbReference type="UniPathway" id="UPA00098">
    <property type="reaction ID" value="UER00360"/>
</dbReference>
<dbReference type="Proteomes" id="UP000000603">
    <property type="component" value="Chromosome"/>
</dbReference>
<dbReference type="GO" id="GO:0005737">
    <property type="term" value="C:cytoplasm"/>
    <property type="evidence" value="ECO:0007669"/>
    <property type="project" value="UniProtKB-SubCell"/>
</dbReference>
<dbReference type="GO" id="GO:0004350">
    <property type="term" value="F:glutamate-5-semialdehyde dehydrogenase activity"/>
    <property type="evidence" value="ECO:0007669"/>
    <property type="project" value="UniProtKB-UniRule"/>
</dbReference>
<dbReference type="GO" id="GO:0050661">
    <property type="term" value="F:NADP binding"/>
    <property type="evidence" value="ECO:0007669"/>
    <property type="project" value="InterPro"/>
</dbReference>
<dbReference type="GO" id="GO:0055129">
    <property type="term" value="P:L-proline biosynthetic process"/>
    <property type="evidence" value="ECO:0007669"/>
    <property type="project" value="UniProtKB-UniRule"/>
</dbReference>
<dbReference type="CDD" id="cd07079">
    <property type="entry name" value="ALDH_F18-19_ProA-GPR"/>
    <property type="match status" value="1"/>
</dbReference>
<dbReference type="FunFam" id="3.40.309.10:FF:000006">
    <property type="entry name" value="Gamma-glutamyl phosphate reductase"/>
    <property type="match status" value="1"/>
</dbReference>
<dbReference type="Gene3D" id="3.40.605.10">
    <property type="entry name" value="Aldehyde Dehydrogenase, Chain A, domain 1"/>
    <property type="match status" value="1"/>
</dbReference>
<dbReference type="Gene3D" id="3.40.309.10">
    <property type="entry name" value="Aldehyde Dehydrogenase, Chain A, domain 2"/>
    <property type="match status" value="1"/>
</dbReference>
<dbReference type="HAMAP" id="MF_00412">
    <property type="entry name" value="ProA"/>
    <property type="match status" value="1"/>
</dbReference>
<dbReference type="InterPro" id="IPR016161">
    <property type="entry name" value="Ald_DH/histidinol_DH"/>
</dbReference>
<dbReference type="InterPro" id="IPR016163">
    <property type="entry name" value="Ald_DH_C"/>
</dbReference>
<dbReference type="InterPro" id="IPR016162">
    <property type="entry name" value="Ald_DH_N"/>
</dbReference>
<dbReference type="InterPro" id="IPR015590">
    <property type="entry name" value="Aldehyde_DH_dom"/>
</dbReference>
<dbReference type="InterPro" id="IPR020593">
    <property type="entry name" value="G-glutamylP_reductase_CS"/>
</dbReference>
<dbReference type="InterPro" id="IPR012134">
    <property type="entry name" value="Glu-5-SA_DH"/>
</dbReference>
<dbReference type="InterPro" id="IPR000965">
    <property type="entry name" value="GPR_dom"/>
</dbReference>
<dbReference type="NCBIfam" id="NF001221">
    <property type="entry name" value="PRK00197.1"/>
    <property type="match status" value="1"/>
</dbReference>
<dbReference type="NCBIfam" id="TIGR00407">
    <property type="entry name" value="proA"/>
    <property type="match status" value="1"/>
</dbReference>
<dbReference type="PANTHER" id="PTHR11063:SF8">
    <property type="entry name" value="DELTA-1-PYRROLINE-5-CARBOXYLATE SYNTHASE"/>
    <property type="match status" value="1"/>
</dbReference>
<dbReference type="PANTHER" id="PTHR11063">
    <property type="entry name" value="GLUTAMATE SEMIALDEHYDE DEHYDROGENASE"/>
    <property type="match status" value="1"/>
</dbReference>
<dbReference type="Pfam" id="PF00171">
    <property type="entry name" value="Aldedh"/>
    <property type="match status" value="1"/>
</dbReference>
<dbReference type="PIRSF" id="PIRSF000151">
    <property type="entry name" value="GPR"/>
    <property type="match status" value="1"/>
</dbReference>
<dbReference type="SUPFAM" id="SSF53720">
    <property type="entry name" value="ALDH-like"/>
    <property type="match status" value="1"/>
</dbReference>
<dbReference type="PROSITE" id="PS01223">
    <property type="entry name" value="PROA"/>
    <property type="match status" value="1"/>
</dbReference>
<keyword id="KW-0028">Amino-acid biosynthesis</keyword>
<keyword id="KW-0963">Cytoplasm</keyword>
<keyword id="KW-0521">NADP</keyword>
<keyword id="KW-0560">Oxidoreductase</keyword>
<keyword id="KW-0641">Proline biosynthesis</keyword>
<accession>Q6A9H6</accession>